<reference key="1">
    <citation type="journal article" date="2006" name="Science">
        <title>Genome of rice cluster I archaea -- the key methane producers in the rice rhizosphere.</title>
        <authorList>
            <person name="Erkel C."/>
            <person name="Kube M."/>
            <person name="Reinhardt R."/>
            <person name="Liesack W."/>
        </authorList>
    </citation>
    <scope>NUCLEOTIDE SEQUENCE [LARGE SCALE GENOMIC DNA]</scope>
    <source>
        <strain>DSM 22066 / NBRC 105507 / MRE50</strain>
    </source>
</reference>
<proteinExistence type="inferred from homology"/>
<organism>
    <name type="scientific">Methanocella arvoryzae (strain DSM 22066 / NBRC 105507 / MRE50)</name>
    <dbReference type="NCBI Taxonomy" id="351160"/>
    <lineage>
        <taxon>Archaea</taxon>
        <taxon>Methanobacteriati</taxon>
        <taxon>Methanobacteriota</taxon>
        <taxon>Stenosarchaea group</taxon>
        <taxon>Methanomicrobia</taxon>
        <taxon>Methanocellales</taxon>
        <taxon>Methanocellaceae</taxon>
        <taxon>Methanocella</taxon>
    </lineage>
</organism>
<protein>
    <recommendedName>
        <fullName evidence="1">Hydroxymethylglutaryl-CoA synthase</fullName>
        <shortName evidence="1">HMG-CoA synthase</shortName>
        <shortName evidence="1">HMGCS</shortName>
        <ecNumber evidence="1">2.3.3.10</ecNumber>
    </recommendedName>
</protein>
<dbReference type="EC" id="2.3.3.10" evidence="1"/>
<dbReference type="EMBL" id="AM114193">
    <property type="protein sequence ID" value="CAJ35642.1"/>
    <property type="molecule type" value="Genomic_DNA"/>
</dbReference>
<dbReference type="RefSeq" id="WP_012036855.1">
    <property type="nucleotide sequence ID" value="NC_009464.1"/>
</dbReference>
<dbReference type="SMR" id="Q0W7K1"/>
<dbReference type="STRING" id="351160.RCIX149"/>
<dbReference type="GeneID" id="5143775"/>
<dbReference type="KEGG" id="rci:RCIX149"/>
<dbReference type="PATRIC" id="fig|351160.9.peg.2594"/>
<dbReference type="eggNOG" id="arCOG01767">
    <property type="taxonomic scope" value="Archaea"/>
</dbReference>
<dbReference type="OrthoDB" id="5812at2157"/>
<dbReference type="UniPathway" id="UPA00058">
    <property type="reaction ID" value="UER00102"/>
</dbReference>
<dbReference type="Proteomes" id="UP000000663">
    <property type="component" value="Chromosome"/>
</dbReference>
<dbReference type="GO" id="GO:0003985">
    <property type="term" value="F:acetyl-CoA C-acetyltransferase activity"/>
    <property type="evidence" value="ECO:0007669"/>
    <property type="project" value="UniProtKB-UniRule"/>
</dbReference>
<dbReference type="GO" id="GO:0004421">
    <property type="term" value="F:hydroxymethylglutaryl-CoA synthase activity"/>
    <property type="evidence" value="ECO:0007669"/>
    <property type="project" value="InterPro"/>
</dbReference>
<dbReference type="GO" id="GO:0010142">
    <property type="term" value="P:farnesyl diphosphate biosynthetic process, mevalonate pathway"/>
    <property type="evidence" value="ECO:0007669"/>
    <property type="project" value="TreeGrafter"/>
</dbReference>
<dbReference type="GO" id="GO:0019287">
    <property type="term" value="P:isopentenyl diphosphate biosynthetic process, mevalonate pathway"/>
    <property type="evidence" value="ECO:0007669"/>
    <property type="project" value="UniProtKB-UniRule"/>
</dbReference>
<dbReference type="CDD" id="cd00827">
    <property type="entry name" value="init_cond_enzymes"/>
    <property type="match status" value="1"/>
</dbReference>
<dbReference type="Gene3D" id="3.40.47.10">
    <property type="match status" value="1"/>
</dbReference>
<dbReference type="HAMAP" id="MF_01409">
    <property type="entry name" value="HMG_CoA_synth_arch"/>
    <property type="match status" value="1"/>
</dbReference>
<dbReference type="InterPro" id="IPR013747">
    <property type="entry name" value="ACP_syn_III_C"/>
</dbReference>
<dbReference type="InterPro" id="IPR004656">
    <property type="entry name" value="HMG_CoA_Synthase"/>
</dbReference>
<dbReference type="InterPro" id="IPR016039">
    <property type="entry name" value="Thiolase-like"/>
</dbReference>
<dbReference type="NCBIfam" id="TIGR00748">
    <property type="entry name" value="HMG_CoA_syn_Arc"/>
    <property type="match status" value="1"/>
</dbReference>
<dbReference type="NCBIfam" id="NF003274">
    <property type="entry name" value="PRK04262.1"/>
    <property type="match status" value="1"/>
</dbReference>
<dbReference type="PANTHER" id="PTHR43323">
    <property type="entry name" value="3-HYDROXY-3-METHYLGLUTARYL COENZYME A SYNTHASE"/>
    <property type="match status" value="1"/>
</dbReference>
<dbReference type="PANTHER" id="PTHR43323:SF2">
    <property type="entry name" value="HYDROXYMETHYLGLUTARYL-COA SYNTHASE"/>
    <property type="match status" value="1"/>
</dbReference>
<dbReference type="Pfam" id="PF08541">
    <property type="entry name" value="ACP_syn_III_C"/>
    <property type="match status" value="1"/>
</dbReference>
<dbReference type="SUPFAM" id="SSF53901">
    <property type="entry name" value="Thiolase-like"/>
    <property type="match status" value="2"/>
</dbReference>
<evidence type="ECO:0000255" key="1">
    <source>
        <dbReference type="HAMAP-Rule" id="MF_01409"/>
    </source>
</evidence>
<sequence>MKLGISAYGAYVPQYRIKVEEIAKVWGDDADDYRNGLMVSEKSVPDVDEDTATIAVEAARNAIARGADPKKIGAIYVGSESHPYAVKPTATIVAAAIGAPNRMTAADFEFACKAGTAAIQTSMGVVASGLAETALAIGADTSQGAPGDALEYTAAAGGAAFVISKNDHIAVINHTCSFTSDTPDFWRREGADYPRHGGRFTGDPGYFKHVLSASRMMLECQGTKPSDYNYAVFHQPNGKFPTRAALTLGFKKEQLSPGLTCPMMGNTYSGASMVGLSAVLDIAKPGERIFVTSFGSGAGSDSFDITVTDRITEVQDLAPKTWDYIKKAKYLDYASYARHKGKINTDN</sequence>
<keyword id="KW-0012">Acyltransferase</keyword>
<keyword id="KW-0414">Isoprene biosynthesis</keyword>
<keyword id="KW-1185">Reference proteome</keyword>
<keyword id="KW-0808">Transferase</keyword>
<name>HMGCS_METAR</name>
<accession>Q0W7K1</accession>
<comment type="function">
    <text evidence="1">Catalyzes the condensation of acetyl-CoA with acetoacetyl-CoA to form 3-hydroxy-3-methylglutaryl-CoA (HMG-CoA). Functions in the mevalonate (MVA) pathway leading to isopentenyl diphosphate (IPP), a key precursor for the biosynthesis of isoprenoid compounds that are building blocks of archaeal membrane lipids.</text>
</comment>
<comment type="catalytic activity">
    <reaction evidence="1">
        <text>acetoacetyl-CoA + acetyl-CoA + H2O = (3S)-3-hydroxy-3-methylglutaryl-CoA + CoA + H(+)</text>
        <dbReference type="Rhea" id="RHEA:10188"/>
        <dbReference type="ChEBI" id="CHEBI:15377"/>
        <dbReference type="ChEBI" id="CHEBI:15378"/>
        <dbReference type="ChEBI" id="CHEBI:43074"/>
        <dbReference type="ChEBI" id="CHEBI:57286"/>
        <dbReference type="ChEBI" id="CHEBI:57287"/>
        <dbReference type="ChEBI" id="CHEBI:57288"/>
        <dbReference type="EC" id="2.3.3.10"/>
    </reaction>
    <physiologicalReaction direction="left-to-right" evidence="1">
        <dbReference type="Rhea" id="RHEA:10189"/>
    </physiologicalReaction>
</comment>
<comment type="pathway">
    <text evidence="1">Metabolic intermediate biosynthesis; (R)-mevalonate biosynthesis; (R)-mevalonate from acetyl-CoA: step 2/3.</text>
</comment>
<comment type="subunit">
    <text evidence="1">Interacts with acetoacetyl-CoA thiolase that catalyzes the precedent step in the pathway and with a DUF35 protein. The acetoacetyl-CoA thiolase/HMG-CoA synthase complex channels the intermediate via a fused CoA-binding site, which allows for efficient coupling of the endergonic thiolase reaction with the exergonic HMGCS reaction.</text>
</comment>
<comment type="similarity">
    <text evidence="1">Belongs to the thiolase-like superfamily. Archaeal HMG-CoA synthase family.</text>
</comment>
<gene>
    <name type="ordered locus">UNCMA_25380</name>
    <name type="ORF">RCIX149</name>
</gene>
<feature type="chain" id="PRO_1000068450" description="Hydroxymethylglutaryl-CoA synthase">
    <location>
        <begin position="1"/>
        <end position="347"/>
    </location>
</feature>
<feature type="active site" description="Proton donor/acceptor" evidence="1">
    <location>
        <position position="80"/>
    </location>
</feature>
<feature type="active site" description="Acyl-thioester intermediate" evidence="1">
    <location>
        <position position="112"/>
    </location>
</feature>
<feature type="active site" description="Proton donor/acceptor" evidence="1">
    <location>
        <position position="234"/>
    </location>
</feature>
<feature type="binding site" evidence="1">
    <location>
        <position position="29"/>
    </location>
    <ligand>
        <name>(3S)-3-hydroxy-3-methylglutaryl-CoA</name>
        <dbReference type="ChEBI" id="CHEBI:43074"/>
    </ligand>
</feature>
<feature type="binding site" evidence="1">
    <location>
        <position position="30"/>
    </location>
    <ligand>
        <name>(3S)-3-hydroxy-3-methylglutaryl-CoA</name>
        <dbReference type="ChEBI" id="CHEBI:43074"/>
    </ligand>
</feature>
<feature type="binding site" evidence="1">
    <location>
        <position position="112"/>
    </location>
    <ligand>
        <name>(3S)-3-hydroxy-3-methylglutaryl-CoA</name>
        <dbReference type="ChEBI" id="CHEBI:43074"/>
    </ligand>
</feature>
<feature type="binding site" evidence="1">
    <location>
        <position position="153"/>
    </location>
    <ligand>
        <name>(3S)-3-hydroxy-3-methylglutaryl-CoA</name>
        <dbReference type="ChEBI" id="CHEBI:43074"/>
    </ligand>
</feature>
<feature type="binding site" evidence="1">
    <location>
        <position position="199"/>
    </location>
    <ligand>
        <name>CoA</name>
        <dbReference type="ChEBI" id="CHEBI:57287"/>
        <note>ligand shared with acetoacetyl-CoA thiolase</note>
    </ligand>
</feature>
<feature type="binding site" evidence="1">
    <location>
        <position position="201"/>
    </location>
    <ligand>
        <name>(3S)-3-hydroxy-3-methylglutaryl-CoA</name>
        <dbReference type="ChEBI" id="CHEBI:43074"/>
    </ligand>
</feature>
<feature type="binding site" evidence="1">
    <location>
        <position position="234"/>
    </location>
    <ligand>
        <name>(3S)-3-hydroxy-3-methylglutaryl-CoA</name>
        <dbReference type="ChEBI" id="CHEBI:43074"/>
    </ligand>
</feature>
<feature type="binding site" evidence="1">
    <location>
        <position position="239"/>
    </location>
    <ligand>
        <name>CoA</name>
        <dbReference type="ChEBI" id="CHEBI:57287"/>
        <note>ligand shared with acetoacetyl-CoA thiolase</note>
    </ligand>
</feature>
<feature type="binding site" evidence="1">
    <location>
        <position position="243"/>
    </location>
    <ligand>
        <name>(3S)-3-hydroxy-3-methylglutaryl-CoA</name>
        <dbReference type="ChEBI" id="CHEBI:43074"/>
    </ligand>
</feature>
<feature type="binding site" evidence="1">
    <location>
        <position position="266"/>
    </location>
    <ligand>
        <name>(3S)-3-hydroxy-3-methylglutaryl-CoA</name>
        <dbReference type="ChEBI" id="CHEBI:43074"/>
    </ligand>
</feature>
<feature type="binding site" evidence="1">
    <location>
        <position position="296"/>
    </location>
    <ligand>
        <name>(3S)-3-hydroxy-3-methylglutaryl-CoA</name>
        <dbReference type="ChEBI" id="CHEBI:43074"/>
    </ligand>
</feature>